<comment type="function">
    <text evidence="1">Component of the A-type ATP synthase that produces ATP from ADP in the presence of a proton gradient across the membrane. The B chain is a regulatory subunit.</text>
</comment>
<comment type="subunit">
    <text evidence="1">Has multiple subunits with at least A(3), B(3), C, D, E, F, H, I and proteolipid K(x).</text>
</comment>
<comment type="subcellular location">
    <subcellularLocation>
        <location evidence="1">Cell membrane</location>
        <topology evidence="1">Peripheral membrane protein</topology>
    </subcellularLocation>
</comment>
<comment type="similarity">
    <text evidence="1">Belongs to the ATPase alpha/beta chains family.</text>
</comment>
<proteinExistence type="inferred from homology"/>
<feature type="chain" id="PRO_1000059377" description="A-type ATP synthase subunit B">
    <location>
        <begin position="1"/>
        <end position="458"/>
    </location>
</feature>
<dbReference type="EMBL" id="CP000559">
    <property type="protein sequence ID" value="ABN07392.1"/>
    <property type="molecule type" value="Genomic_DNA"/>
</dbReference>
<dbReference type="RefSeq" id="WP_011833595.1">
    <property type="nucleotide sequence ID" value="NC_008942.1"/>
</dbReference>
<dbReference type="SMR" id="A2SST6"/>
<dbReference type="STRING" id="410358.Mlab_1223"/>
<dbReference type="GeneID" id="4795870"/>
<dbReference type="KEGG" id="mla:Mlab_1223"/>
<dbReference type="eggNOG" id="arCOG00865">
    <property type="taxonomic scope" value="Archaea"/>
</dbReference>
<dbReference type="HOGENOM" id="CLU_022916_0_0_2"/>
<dbReference type="OrthoDB" id="32941at2157"/>
<dbReference type="Proteomes" id="UP000000365">
    <property type="component" value="Chromosome"/>
</dbReference>
<dbReference type="GO" id="GO:0005886">
    <property type="term" value="C:plasma membrane"/>
    <property type="evidence" value="ECO:0007669"/>
    <property type="project" value="UniProtKB-SubCell"/>
</dbReference>
<dbReference type="GO" id="GO:0005524">
    <property type="term" value="F:ATP binding"/>
    <property type="evidence" value="ECO:0007669"/>
    <property type="project" value="UniProtKB-UniRule"/>
</dbReference>
<dbReference type="GO" id="GO:0046933">
    <property type="term" value="F:proton-transporting ATP synthase activity, rotational mechanism"/>
    <property type="evidence" value="ECO:0007669"/>
    <property type="project" value="UniProtKB-UniRule"/>
</dbReference>
<dbReference type="GO" id="GO:0042777">
    <property type="term" value="P:proton motive force-driven plasma membrane ATP synthesis"/>
    <property type="evidence" value="ECO:0007669"/>
    <property type="project" value="UniProtKB-UniRule"/>
</dbReference>
<dbReference type="CDD" id="cd18112">
    <property type="entry name" value="ATP-synt_V_A-type_beta_C"/>
    <property type="match status" value="1"/>
</dbReference>
<dbReference type="CDD" id="cd18118">
    <property type="entry name" value="ATP-synt_V_A-type_beta_N"/>
    <property type="match status" value="1"/>
</dbReference>
<dbReference type="CDD" id="cd01135">
    <property type="entry name" value="V_A-ATPase_B"/>
    <property type="match status" value="1"/>
</dbReference>
<dbReference type="Gene3D" id="3.40.50.12240">
    <property type="match status" value="1"/>
</dbReference>
<dbReference type="HAMAP" id="MF_00310">
    <property type="entry name" value="ATP_synth_B_arch"/>
    <property type="match status" value="1"/>
</dbReference>
<dbReference type="InterPro" id="IPR055190">
    <property type="entry name" value="ATP-synt_VA_C"/>
</dbReference>
<dbReference type="InterPro" id="IPR020003">
    <property type="entry name" value="ATPase_a/bsu_AS"/>
</dbReference>
<dbReference type="InterPro" id="IPR004100">
    <property type="entry name" value="ATPase_F1/V1/A1_a/bsu_N"/>
</dbReference>
<dbReference type="InterPro" id="IPR000194">
    <property type="entry name" value="ATPase_F1/V1/A1_a/bsu_nucl-bd"/>
</dbReference>
<dbReference type="InterPro" id="IPR027417">
    <property type="entry name" value="P-loop_NTPase"/>
</dbReference>
<dbReference type="InterPro" id="IPR022879">
    <property type="entry name" value="V-ATPase_su_B/beta"/>
</dbReference>
<dbReference type="NCBIfam" id="NF003235">
    <property type="entry name" value="PRK04196.1"/>
    <property type="match status" value="1"/>
</dbReference>
<dbReference type="PANTHER" id="PTHR43389">
    <property type="entry name" value="V-TYPE PROTON ATPASE SUBUNIT B"/>
    <property type="match status" value="1"/>
</dbReference>
<dbReference type="PANTHER" id="PTHR43389:SF4">
    <property type="entry name" value="V-TYPE PROTON ATPASE SUBUNIT B"/>
    <property type="match status" value="1"/>
</dbReference>
<dbReference type="Pfam" id="PF00006">
    <property type="entry name" value="ATP-synt_ab"/>
    <property type="match status" value="1"/>
</dbReference>
<dbReference type="Pfam" id="PF02874">
    <property type="entry name" value="ATP-synt_ab_N"/>
    <property type="match status" value="1"/>
</dbReference>
<dbReference type="Pfam" id="PF22919">
    <property type="entry name" value="ATP-synt_VA_C"/>
    <property type="match status" value="1"/>
</dbReference>
<dbReference type="PIRSF" id="PIRSF039114">
    <property type="entry name" value="V-ATPsynth_beta/V-ATPase_B"/>
    <property type="match status" value="1"/>
</dbReference>
<dbReference type="SUPFAM" id="SSF47917">
    <property type="entry name" value="C-terminal domain of alpha and beta subunits of F1 ATP synthase"/>
    <property type="match status" value="1"/>
</dbReference>
<dbReference type="SUPFAM" id="SSF52540">
    <property type="entry name" value="P-loop containing nucleoside triphosphate hydrolases"/>
    <property type="match status" value="1"/>
</dbReference>
<dbReference type="PROSITE" id="PS00152">
    <property type="entry name" value="ATPASE_ALPHA_BETA"/>
    <property type="match status" value="1"/>
</dbReference>
<organism>
    <name type="scientific">Methanocorpusculum labreanum (strain ATCC 43576 / DSM 4855 / Z)</name>
    <dbReference type="NCBI Taxonomy" id="410358"/>
    <lineage>
        <taxon>Archaea</taxon>
        <taxon>Methanobacteriati</taxon>
        <taxon>Methanobacteriota</taxon>
        <taxon>Stenosarchaea group</taxon>
        <taxon>Methanomicrobia</taxon>
        <taxon>Methanomicrobiales</taxon>
        <taxon>Methanocorpusculaceae</taxon>
        <taxon>Methanocorpusculum</taxon>
    </lineage>
</organism>
<reference key="1">
    <citation type="journal article" date="2009" name="Stand. Genomic Sci.">
        <title>Complete genome sequence of Methanocorpusculum labreanum type strain Z.</title>
        <authorList>
            <person name="Anderson I.J."/>
            <person name="Sieprawska-Lupa M."/>
            <person name="Goltsman E."/>
            <person name="Lapidus A."/>
            <person name="Copeland A."/>
            <person name="Glavina Del Rio T."/>
            <person name="Tice H."/>
            <person name="Dalin E."/>
            <person name="Barry K."/>
            <person name="Pitluck S."/>
            <person name="Hauser L."/>
            <person name="Land M."/>
            <person name="Lucas S."/>
            <person name="Richardson P."/>
            <person name="Whitman W.B."/>
            <person name="Kyrpides N.C."/>
        </authorList>
    </citation>
    <scope>NUCLEOTIDE SEQUENCE [LARGE SCALE GENOMIC DNA]</scope>
    <source>
        <strain>ATCC 43576 / DSM 4855 / Z</strain>
    </source>
</reference>
<name>AATB_METLZ</name>
<evidence type="ECO:0000255" key="1">
    <source>
        <dbReference type="HAMAP-Rule" id="MF_00310"/>
    </source>
</evidence>
<accession>A2SST6</accession>
<gene>
    <name evidence="1" type="primary">atpB</name>
    <name type="ordered locus">Mlab_1223</name>
</gene>
<keyword id="KW-0066">ATP synthesis</keyword>
<keyword id="KW-1003">Cell membrane</keyword>
<keyword id="KW-0375">Hydrogen ion transport</keyword>
<keyword id="KW-0406">Ion transport</keyword>
<keyword id="KW-0472">Membrane</keyword>
<keyword id="KW-1185">Reference proteome</keyword>
<keyword id="KW-0813">Transport</keyword>
<sequence length="458" mass="50441">MKEYKTVSKVAGPLLFVEKTEPVSYEEQVSLVLADGTMKRGQVLDTSEDLVVVQCFETTTGLGRDTGVRFLGETFKMPVSKTMLGRILSGGGKPIDGGPAIVPDKRLDINGAAINPYARGTPRDFIQTGISTIDGTNTLVRGQKLPIFSSAGLPHNEIALQIARQAKVPGSSDEFAVVFAAMGITREEANYFMADFERTGALERAVVFLNLADDPAVERTVTPRLALTTAEYLAYELGYHVLVILTDMTNYCEALRQIGAAREEVPGRRGYPGYMYTDLASIYERAGIIKGLKGSVTQIPILTMPGDDITHPIPDLTGYITEGQIVISPELHRKGIYPPINVLPSLSRLMNLGIGKGMTREDHKKVSDMMYSGYAEGVDLRGLVAIVGKDALSERDQKFLEFADAFEDKFVRQGSDEDRTIAQTLDVGWGMFTQLPESELEKRIDRDLIKTYHPNYRK</sequence>
<protein>
    <recommendedName>
        <fullName evidence="1">A-type ATP synthase subunit B</fullName>
    </recommendedName>
</protein>